<evidence type="ECO:0000255" key="1">
    <source>
        <dbReference type="PROSITE-ProRule" id="PRU01163"/>
    </source>
</evidence>
<evidence type="ECO:0000269" key="2">
    <source>
    </source>
</evidence>
<evidence type="ECO:0000305" key="3"/>
<dbReference type="EMBL" id="M37273">
    <property type="protein sequence ID" value="AAA98213.1"/>
    <property type="status" value="ALT_FRAME"/>
    <property type="molecule type" value="Genomic_DNA"/>
</dbReference>
<dbReference type="EMBL" id="M19465">
    <property type="protein sequence ID" value="AAA88360.1"/>
    <property type="molecule type" value="Genomic_DNA"/>
</dbReference>
<dbReference type="EMBL" id="M20270">
    <property type="protein sequence ID" value="AAA26671.1"/>
    <property type="molecule type" value="Genomic_DNA"/>
</dbReference>
<dbReference type="EMBL" id="AF051917">
    <property type="protein sequence ID" value="AAC61949.1"/>
    <property type="molecule type" value="Genomic_DNA"/>
</dbReference>
<dbReference type="EMBL" id="AF181950">
    <property type="protein sequence ID" value="AAF85648.1"/>
    <property type="molecule type" value="Genomic_DNA"/>
</dbReference>
<dbReference type="EMBL" id="AB037419">
    <property type="protein sequence ID" value="BAC00981.1"/>
    <property type="molecule type" value="Genomic_DNA"/>
</dbReference>
<dbReference type="EMBL" id="AB037420">
    <property type="protein sequence ID" value="BAC00987.1"/>
    <property type="molecule type" value="Genomic_DNA"/>
</dbReference>
<dbReference type="PIR" id="T44128">
    <property type="entry name" value="T44128"/>
</dbReference>
<dbReference type="RefSeq" id="NP_040432.1">
    <property type="nucleotide sequence ID" value="NC_001384.1"/>
</dbReference>
<dbReference type="RefSeq" id="NP_863620.1">
    <property type="nucleotide sequence ID" value="NC_005024.1"/>
</dbReference>
<dbReference type="RefSeq" id="YP_002790915.1">
    <property type="nucleotide sequence ID" value="NC_012547.1"/>
</dbReference>
<dbReference type="RefSeq" id="YP_006937661.1">
    <property type="nucleotide sequence ID" value="NC_013320.1"/>
</dbReference>
<dbReference type="SMR" id="Q7DJ53"/>
<dbReference type="PRO" id="PR:Q7DJ53"/>
<dbReference type="GO" id="GO:0046677">
    <property type="term" value="P:response to antibiotic"/>
    <property type="evidence" value="ECO:0007669"/>
    <property type="project" value="UniProtKB-KW"/>
</dbReference>
<dbReference type="CDD" id="cd08349">
    <property type="entry name" value="BLMA_like"/>
    <property type="match status" value="1"/>
</dbReference>
<dbReference type="Gene3D" id="3.10.180.10">
    <property type="entry name" value="2,3-Dihydroxybiphenyl 1,2-Dioxygenase, domain 1"/>
    <property type="match status" value="1"/>
</dbReference>
<dbReference type="InterPro" id="IPR000335">
    <property type="entry name" value="Bleomycin-R"/>
</dbReference>
<dbReference type="InterPro" id="IPR029068">
    <property type="entry name" value="Glyas_Bleomycin-R_OHBP_Dase"/>
</dbReference>
<dbReference type="InterPro" id="IPR004360">
    <property type="entry name" value="Glyas_Fos-R_dOase_dom"/>
</dbReference>
<dbReference type="InterPro" id="IPR037523">
    <property type="entry name" value="VOC"/>
</dbReference>
<dbReference type="NCBIfam" id="NF000027">
    <property type="entry name" value="156720500_bleO"/>
    <property type="match status" value="1"/>
</dbReference>
<dbReference type="Pfam" id="PF00903">
    <property type="entry name" value="Glyoxalase"/>
    <property type="match status" value="1"/>
</dbReference>
<dbReference type="PRINTS" id="PR00311">
    <property type="entry name" value="BLEOMYCINRST"/>
</dbReference>
<dbReference type="SUPFAM" id="SSF54593">
    <property type="entry name" value="Glyoxalase/Bleomycin resistance protein/Dihydroxybiphenyl dioxygenase"/>
    <property type="match status" value="1"/>
</dbReference>
<dbReference type="PROSITE" id="PS51819">
    <property type="entry name" value="VOC"/>
    <property type="match status" value="1"/>
</dbReference>
<accession>Q7DJ53</accession>
<accession>P13014</accession>
<accession>P22491</accession>
<accession>Q6LDT5</accession>
<accession>Q79ER2</accession>
<comment type="function">
    <text evidence="2">Binding protein with a strong affinity to the bleomycin family of antibiotics, which confers resistance to these antibiotics by preventing the bleomycin-induced DNA breakage.</text>
</comment>
<comment type="similarity">
    <text evidence="3">Belongs to the bleomycin resistance protein family.</text>
</comment>
<comment type="sequence caution" evidence="3">
    <conflict type="frameshift">
        <sequence resource="EMBL-CDS" id="AAA98213"/>
    </conflict>
</comment>
<protein>
    <recommendedName>
        <fullName>Bleomycin resistance protein</fullName>
        <shortName>BRP</shortName>
    </recommendedName>
    <alternativeName>
        <fullName>Bleomycin-binding protein</fullName>
    </alternativeName>
</protein>
<feature type="chain" id="PRO_0000068562" description="Bleomycin resistance protein">
    <location>
        <begin position="1"/>
        <end position="132"/>
    </location>
</feature>
<feature type="domain" description="VOC" evidence="1">
    <location>
        <begin position="1"/>
        <end position="129"/>
    </location>
</feature>
<feature type="sequence conflict" description="In Ref. 1; AAA98213." evidence="3" ref="1">
    <original>C</original>
    <variation>W</variation>
    <location>
        <position position="21"/>
    </location>
</feature>
<feature type="sequence conflict" description="In Ref. 1; AAA98213." evidence="3" ref="1">
    <original>L</original>
    <variation>V</variation>
    <location>
        <position position="24"/>
    </location>
</feature>
<sequence>MLQSIPALPVGDIKKSIGFYCDKLGFTLVHHEDGFAVLMCNEVRIHLWEASDEGWRSRSNDSPVCTGAESFIAGTASCRIEVEGIDELYQHIKPLGILHPNTSLKDQWWDERDFAVIDPDNNLISFFQQIKS</sequence>
<name>BLE_STAAU</name>
<keyword id="KW-0046">Antibiotic resistance</keyword>
<keyword id="KW-0903">Direct protein sequencing</keyword>
<keyword id="KW-0614">Plasmid</keyword>
<geneLocation type="plasmid">
    <name>pUB110</name>
</geneLocation>
<geneLocation type="plasmid">
    <name>pSK41</name>
</geneLocation>
<gene>
    <name type="primary">ble</name>
    <name type="synonym">bleO</name>
    <name type="synonym">blmS</name>
</gene>
<organism>
    <name type="scientific">Staphylococcus aureus</name>
    <dbReference type="NCBI Taxonomy" id="1280"/>
    <lineage>
        <taxon>Bacteria</taxon>
        <taxon>Bacillati</taxon>
        <taxon>Bacillota</taxon>
        <taxon>Bacilli</taxon>
        <taxon>Bacillales</taxon>
        <taxon>Staphylococcaceae</taxon>
        <taxon>Staphylococcus</taxon>
    </lineage>
</organism>
<proteinExistence type="evidence at protein level"/>
<reference key="1">
    <citation type="journal article" date="1986" name="Genetika">
        <title>Nucleotide sequence and physical map of kanamycin-resistant plasmid pUB110 from Staphylococcus aureus.</title>
        <authorList>
            <person name="Bashkirov V.I."/>
            <person name="Mil'Shina N.V."/>
            <person name="Prozorov A.A."/>
        </authorList>
    </citation>
    <scope>NUCLEOTIDE SEQUENCE [GENOMIC DNA]</scope>
    <source>
        <plasmid>pUB110</plasmid>
    </source>
</reference>
<reference key="2">
    <citation type="journal article" date="1986" name="Plasmid">
        <title>The nucleotide sequence of pUB110: some salient features in relation to replication and its regulation.</title>
        <authorList>
            <person name="McKenzie T."/>
            <person name="Hoshino T."/>
            <person name="Tanaka T."/>
            <person name="Sueoka N."/>
        </authorList>
    </citation>
    <scope>NUCLEOTIDE SEQUENCE [GENOMIC DNA]</scope>
    <source>
        <plasmid>pUB110</plasmid>
    </source>
</reference>
<reference key="3">
    <citation type="journal article" date="1987" name="Plasmid">
        <title>Correction. A revision of the nucleotide sequence and functional map of pUB110.</title>
        <authorList>
            <person name="McKenzie T."/>
            <person name="Hoshino T."/>
            <person name="Tanaka T."/>
            <person name="Sueoka N."/>
        </authorList>
    </citation>
    <scope>SEQUENCE REVISION</scope>
</reference>
<reference key="4">
    <citation type="journal article" date="1987" name="Plasmid">
        <title>Plasmid-determined bleomycin resistance in Staphylococcus aureus.</title>
        <authorList>
            <person name="Semon D."/>
            <person name="Movva N.R."/>
            <person name="Smith T.F."/>
            <person name="Alama M.E."/>
            <person name="Davies J.E."/>
        </authorList>
    </citation>
    <scope>NUCLEOTIDE SEQUENCE [GENOMIC DNA]</scope>
    <source>
        <plasmid>pUB110</plasmid>
    </source>
</reference>
<reference key="5">
    <citation type="journal article" date="1998" name="J. Bacteriol.">
        <title>Complete nucleotide sequence of pSK41: evolution of staphylococcal conjugative multiresistance plasmids.</title>
        <authorList>
            <person name="Berg T."/>
            <person name="Firth N."/>
            <person name="Apisiridej S."/>
            <person name="Hettiaratchi A."/>
            <person name="Leelaporn A."/>
            <person name="Skurray R.A."/>
        </authorList>
    </citation>
    <scope>NUCLEOTIDE SEQUENCE [GENOMIC DNA]</scope>
    <source>
        <plasmid>pSK41</plasmid>
    </source>
</reference>
<reference key="6">
    <citation type="journal article" date="2000" name="Antimicrob. Agents Chemother.">
        <title>Genetic organization of the downstream region of the mecA element in methicillin-resistant Staphylococcus aureus isolates carrying different polymorphisms of this region.</title>
        <authorList>
            <person name="Oliveira D.C."/>
            <person name="Wu S.W."/>
            <person name="de Lencastre H."/>
        </authorList>
    </citation>
    <scope>NUCLEOTIDE SEQUENCE [GENOMIC DNA]</scope>
    <source>
        <strain>HUC19</strain>
    </source>
</reference>
<reference key="7">
    <citation type="journal article" date="2002" name="J. Basic Microbiol.">
        <title>Integration analysis of pSK41 in the chromosome of a methicillin-resistant Staphylococcus aureus K-1.</title>
        <authorList>
            <person name="McElgunn C.J."/>
            <person name="Bhuiyan M.Z.A."/>
            <person name="Sugiyama M."/>
        </authorList>
    </citation>
    <scope>NUCLEOTIDE SEQUENCE [GENOMIC DNA]</scope>
    <source>
        <strain>MRSA B-26</strain>
        <strain>MRSA K-1</strain>
    </source>
</reference>
<reference key="8">
    <citation type="journal article" date="1995" name="FEBS Lett.">
        <title>Overproduction of the bleomycin-binding proteins from bleomycin-producing Streptomyces verticillus and a methicillin-resistant Staphylococcus aureus in Escherichia coli and their immunological characterisation.</title>
        <authorList>
            <person name="Sugiyama M."/>
            <person name="Kumagai T."/>
            <person name="Matsuo H."/>
            <person name="Bhuiyan M.Z.A."/>
            <person name="Ueda K."/>
            <person name="Mochizuki H."/>
            <person name="Nakamura N."/>
            <person name="Davies J.E."/>
        </authorList>
    </citation>
    <scope>PROTEIN SEQUENCE OF 1-15</scope>
    <scope>FUNCTION</scope>
    <source>
        <strain>MRSA B-26</strain>
    </source>
</reference>